<name>RL5_ACTPJ</name>
<protein>
    <recommendedName>
        <fullName evidence="1">Large ribosomal subunit protein uL5</fullName>
    </recommendedName>
    <alternativeName>
        <fullName evidence="2">50S ribosomal protein L5</fullName>
    </alternativeName>
</protein>
<evidence type="ECO:0000255" key="1">
    <source>
        <dbReference type="HAMAP-Rule" id="MF_01333"/>
    </source>
</evidence>
<evidence type="ECO:0000305" key="2"/>
<keyword id="KW-0687">Ribonucleoprotein</keyword>
<keyword id="KW-0689">Ribosomal protein</keyword>
<keyword id="KW-0694">RNA-binding</keyword>
<keyword id="KW-0699">rRNA-binding</keyword>
<keyword id="KW-0820">tRNA-binding</keyword>
<gene>
    <name evidence="1" type="primary">rplE</name>
    <name type="ordered locus">APJL_1807</name>
</gene>
<proteinExistence type="inferred from homology"/>
<reference key="1">
    <citation type="journal article" date="2008" name="PLoS ONE">
        <title>Genome biology of Actinobacillus pleuropneumoniae JL03, an isolate of serotype 3 prevalent in China.</title>
        <authorList>
            <person name="Xu Z."/>
            <person name="Zhou Y."/>
            <person name="Li L."/>
            <person name="Zhou R."/>
            <person name="Xiao S."/>
            <person name="Wan Y."/>
            <person name="Zhang S."/>
            <person name="Wang K."/>
            <person name="Li W."/>
            <person name="Li L."/>
            <person name="Jin H."/>
            <person name="Kang M."/>
            <person name="Dalai B."/>
            <person name="Li T."/>
            <person name="Liu L."/>
            <person name="Cheng Y."/>
            <person name="Zhang L."/>
            <person name="Xu T."/>
            <person name="Zheng H."/>
            <person name="Pu S."/>
            <person name="Wang B."/>
            <person name="Gu W."/>
            <person name="Zhang X.L."/>
            <person name="Zhu G.-F."/>
            <person name="Wang S."/>
            <person name="Zhao G.-P."/>
            <person name="Chen H."/>
        </authorList>
    </citation>
    <scope>NUCLEOTIDE SEQUENCE [LARGE SCALE GENOMIC DNA]</scope>
    <source>
        <strain>JL03</strain>
    </source>
</reference>
<comment type="function">
    <text evidence="1">This is one of the proteins that bind and probably mediate the attachment of the 5S RNA into the large ribosomal subunit, where it forms part of the central protuberance. In the 70S ribosome it contacts protein S13 of the 30S subunit (bridge B1b), connecting the 2 subunits; this bridge is implicated in subunit movement. Contacts the P site tRNA; the 5S rRNA and some of its associated proteins might help stabilize positioning of ribosome-bound tRNAs.</text>
</comment>
<comment type="subunit">
    <text evidence="1">Part of the 50S ribosomal subunit; part of the 5S rRNA/L5/L18/L25 subcomplex. Contacts the 5S rRNA and the P site tRNA. Forms a bridge to the 30S subunit in the 70S ribosome.</text>
</comment>
<comment type="similarity">
    <text evidence="1">Belongs to the universal ribosomal protein uL5 family.</text>
</comment>
<sequence length="179" mass="20355">MAKLHDYYRDQVVNELKAKFNYSSVMQVPRIEKITLNMGVGEALTDKKLLDNAVADLTAISGQKPLITKARKSVAGFKIRQGYPIGCKVTLRGERMWEFFERLITIAVPRIRDFRGLNAKSFDGRGNYSMGVREQIIFPEIDYDKVDRVRGLDITITTTAKSDEEGQALLAAFNFPFRK</sequence>
<accession>B0BSU3</accession>
<dbReference type="EMBL" id="CP000687">
    <property type="protein sequence ID" value="ABY70357.1"/>
    <property type="molecule type" value="Genomic_DNA"/>
</dbReference>
<dbReference type="RefSeq" id="WP_005619405.1">
    <property type="nucleotide sequence ID" value="NC_010278.1"/>
</dbReference>
<dbReference type="SMR" id="B0BSU3"/>
<dbReference type="GeneID" id="92743643"/>
<dbReference type="KEGG" id="apj:APJL_1807"/>
<dbReference type="HOGENOM" id="CLU_061015_2_1_6"/>
<dbReference type="Proteomes" id="UP000008547">
    <property type="component" value="Chromosome"/>
</dbReference>
<dbReference type="GO" id="GO:1990904">
    <property type="term" value="C:ribonucleoprotein complex"/>
    <property type="evidence" value="ECO:0007669"/>
    <property type="project" value="UniProtKB-KW"/>
</dbReference>
<dbReference type="GO" id="GO:0005840">
    <property type="term" value="C:ribosome"/>
    <property type="evidence" value="ECO:0007669"/>
    <property type="project" value="UniProtKB-KW"/>
</dbReference>
<dbReference type="GO" id="GO:0019843">
    <property type="term" value="F:rRNA binding"/>
    <property type="evidence" value="ECO:0007669"/>
    <property type="project" value="UniProtKB-UniRule"/>
</dbReference>
<dbReference type="GO" id="GO:0003735">
    <property type="term" value="F:structural constituent of ribosome"/>
    <property type="evidence" value="ECO:0007669"/>
    <property type="project" value="InterPro"/>
</dbReference>
<dbReference type="GO" id="GO:0000049">
    <property type="term" value="F:tRNA binding"/>
    <property type="evidence" value="ECO:0007669"/>
    <property type="project" value="UniProtKB-UniRule"/>
</dbReference>
<dbReference type="GO" id="GO:0006412">
    <property type="term" value="P:translation"/>
    <property type="evidence" value="ECO:0007669"/>
    <property type="project" value="UniProtKB-UniRule"/>
</dbReference>
<dbReference type="FunFam" id="3.30.1440.10:FF:000001">
    <property type="entry name" value="50S ribosomal protein L5"/>
    <property type="match status" value="1"/>
</dbReference>
<dbReference type="Gene3D" id="3.30.1440.10">
    <property type="match status" value="1"/>
</dbReference>
<dbReference type="HAMAP" id="MF_01333_B">
    <property type="entry name" value="Ribosomal_uL5_B"/>
    <property type="match status" value="1"/>
</dbReference>
<dbReference type="InterPro" id="IPR002132">
    <property type="entry name" value="Ribosomal_uL5"/>
</dbReference>
<dbReference type="InterPro" id="IPR020930">
    <property type="entry name" value="Ribosomal_uL5_bac-type"/>
</dbReference>
<dbReference type="InterPro" id="IPR031309">
    <property type="entry name" value="Ribosomal_uL5_C"/>
</dbReference>
<dbReference type="InterPro" id="IPR020929">
    <property type="entry name" value="Ribosomal_uL5_CS"/>
</dbReference>
<dbReference type="InterPro" id="IPR022803">
    <property type="entry name" value="Ribosomal_uL5_dom_sf"/>
</dbReference>
<dbReference type="InterPro" id="IPR031310">
    <property type="entry name" value="Ribosomal_uL5_N"/>
</dbReference>
<dbReference type="NCBIfam" id="NF000585">
    <property type="entry name" value="PRK00010.1"/>
    <property type="match status" value="1"/>
</dbReference>
<dbReference type="PANTHER" id="PTHR11994">
    <property type="entry name" value="60S RIBOSOMAL PROTEIN L11-RELATED"/>
    <property type="match status" value="1"/>
</dbReference>
<dbReference type="Pfam" id="PF00281">
    <property type="entry name" value="Ribosomal_L5"/>
    <property type="match status" value="1"/>
</dbReference>
<dbReference type="Pfam" id="PF00673">
    <property type="entry name" value="Ribosomal_L5_C"/>
    <property type="match status" value="1"/>
</dbReference>
<dbReference type="PIRSF" id="PIRSF002161">
    <property type="entry name" value="Ribosomal_L5"/>
    <property type="match status" value="1"/>
</dbReference>
<dbReference type="SUPFAM" id="SSF55282">
    <property type="entry name" value="RL5-like"/>
    <property type="match status" value="1"/>
</dbReference>
<dbReference type="PROSITE" id="PS00358">
    <property type="entry name" value="RIBOSOMAL_L5"/>
    <property type="match status" value="1"/>
</dbReference>
<feature type="chain" id="PRO_1000142346" description="Large ribosomal subunit protein uL5">
    <location>
        <begin position="1"/>
        <end position="179"/>
    </location>
</feature>
<organism>
    <name type="scientific">Actinobacillus pleuropneumoniae serotype 3 (strain JL03)</name>
    <dbReference type="NCBI Taxonomy" id="434271"/>
    <lineage>
        <taxon>Bacteria</taxon>
        <taxon>Pseudomonadati</taxon>
        <taxon>Pseudomonadota</taxon>
        <taxon>Gammaproteobacteria</taxon>
        <taxon>Pasteurellales</taxon>
        <taxon>Pasteurellaceae</taxon>
        <taxon>Actinobacillus</taxon>
    </lineage>
</organism>